<accession>Q30NP3</accession>
<dbReference type="EC" id="2.7.7.48" evidence="1"/>
<dbReference type="EMBL" id="CY006050">
    <property type="protein sequence ID" value="ABB46400.1"/>
    <property type="molecule type" value="Genomic_RNA"/>
</dbReference>
<dbReference type="SMR" id="Q30NP3"/>
<dbReference type="Proteomes" id="UP000000827">
    <property type="component" value="Genome"/>
</dbReference>
<dbReference type="GO" id="GO:0030430">
    <property type="term" value="C:host cell cytoplasm"/>
    <property type="evidence" value="ECO:0007669"/>
    <property type="project" value="UniProtKB-SubCell"/>
</dbReference>
<dbReference type="GO" id="GO:0042025">
    <property type="term" value="C:host cell nucleus"/>
    <property type="evidence" value="ECO:0007669"/>
    <property type="project" value="UniProtKB-SubCell"/>
</dbReference>
<dbReference type="GO" id="GO:0000166">
    <property type="term" value="F:nucleotide binding"/>
    <property type="evidence" value="ECO:0007669"/>
    <property type="project" value="UniProtKB-UniRule"/>
</dbReference>
<dbReference type="GO" id="GO:0003723">
    <property type="term" value="F:RNA binding"/>
    <property type="evidence" value="ECO:0007669"/>
    <property type="project" value="InterPro"/>
</dbReference>
<dbReference type="GO" id="GO:0003968">
    <property type="term" value="F:RNA-directed RNA polymerase activity"/>
    <property type="evidence" value="ECO:0007669"/>
    <property type="project" value="UniProtKB-UniRule"/>
</dbReference>
<dbReference type="GO" id="GO:0006351">
    <property type="term" value="P:DNA-templated transcription"/>
    <property type="evidence" value="ECO:0007669"/>
    <property type="project" value="UniProtKB-UniRule"/>
</dbReference>
<dbReference type="GO" id="GO:0039657">
    <property type="term" value="P:symbiont-mediated suppression of host gene expression"/>
    <property type="evidence" value="ECO:0007669"/>
    <property type="project" value="UniProtKB-KW"/>
</dbReference>
<dbReference type="GO" id="GO:0039523">
    <property type="term" value="P:symbiont-mediated suppression of host mRNA transcription via inhibition of RNA polymerase II activity"/>
    <property type="evidence" value="ECO:0007669"/>
    <property type="project" value="UniProtKB-UniRule"/>
</dbReference>
<dbReference type="GO" id="GO:0039694">
    <property type="term" value="P:viral RNA genome replication"/>
    <property type="evidence" value="ECO:0007669"/>
    <property type="project" value="UniProtKB-UniRule"/>
</dbReference>
<dbReference type="GO" id="GO:0019083">
    <property type="term" value="P:viral transcription"/>
    <property type="evidence" value="ECO:0007669"/>
    <property type="project" value="UniProtKB-KW"/>
</dbReference>
<dbReference type="Gene3D" id="6.10.140.720">
    <property type="match status" value="1"/>
</dbReference>
<dbReference type="HAMAP" id="MF_04065">
    <property type="entry name" value="INFV_RDRP"/>
    <property type="match status" value="1"/>
</dbReference>
<dbReference type="InterPro" id="IPR007099">
    <property type="entry name" value="RNA-dir_pol_NSvirus"/>
</dbReference>
<dbReference type="InterPro" id="IPR001407">
    <property type="entry name" value="RNA_pol_PB1_influenza"/>
</dbReference>
<dbReference type="Pfam" id="PF00602">
    <property type="entry name" value="Flu_PB1"/>
    <property type="match status" value="1"/>
</dbReference>
<dbReference type="PIRSF" id="PIRSF000827">
    <property type="entry name" value="RdRPol_OMV"/>
    <property type="match status" value="1"/>
</dbReference>
<dbReference type="PROSITE" id="PS50525">
    <property type="entry name" value="RDRP_SSRNA_NEG_SEG"/>
    <property type="match status" value="1"/>
</dbReference>
<proteinExistence type="inferred from homology"/>
<organismHost>
    <name type="scientific">Aves</name>
    <dbReference type="NCBI Taxonomy" id="8782"/>
</organismHost>
<organismHost>
    <name type="scientific">Cetacea</name>
    <name type="common">whales</name>
    <dbReference type="NCBI Taxonomy" id="9721"/>
</organismHost>
<organismHost>
    <name type="scientific">Homo sapiens</name>
    <name type="common">Human</name>
    <dbReference type="NCBI Taxonomy" id="9606"/>
</organismHost>
<organismHost>
    <name type="scientific">Phocidae</name>
    <name type="common">true seals</name>
    <dbReference type="NCBI Taxonomy" id="9709"/>
</organismHost>
<organismHost>
    <name type="scientific">Sus scrofa</name>
    <name type="common">Pig</name>
    <dbReference type="NCBI Taxonomy" id="9823"/>
</organismHost>
<name>RDRP_I75A0</name>
<sequence>MDVNPTLLFLKVPAQNAISTTFPYTGDPPYSHGTGTGYTMDTVNRTHQYSEKGKWTTNTETGAPQLNPIDGPLPEDNEPSGYAQTDCVLEAMAFLEESHPGIFENSCLETMEVVQQTRVDRLTQGRQTYDWTLNRNQPAATALANTIEVFRSNGLTANESGRLIDFLKDVMESMDKEEMEITTHFQRKRRVRDNMTKKMVTQRTIGKKKQRVNKRSYLIRALTLNTMTKDAERGKLKRRAIATPGMQIRGFVYFVETLARSICEKLEQSGLPVGGNEKKAKLANVVRKMMTNSQDTELSFTITGDNTKWNENQNPRMFLAMITYITKNQPEWFRNILSIAPIMFSNKMARLGKGYMFESKRMKLRTQIPAEMLASIDLKYFNESTRKKIEKIRPLLIDGTASLSPGMMMGMFNMLSTVLGVSILNLGQKKYTKTTYWWDGLQSSDDFALIVNAPNHEGIQAGVDRFYRTCKLVGINMSKKKSYINRTGTFEFTSFFYRYGFVANFSMELPSFGVSGINESADMSIGVTVIKNNMINNDLGPATAQMALQLFIKDYRYTYRCHRGDTQIQTRRSFELKKLWEQTRSKAGLLVSDGGPNLYNIRNLHIPEVCLKWELMDEDYQGRLCNPLNPFVSHKEIESVNNAVVMPAHGPAKSMEYDAVATTHSWIPKRNRSILNTSQRGILEDEQMYQKCCNLFEKFFPSSSYRRPVGISSMVEAMVSRARIDARIDFESGRIKKEEFSEIMKICSTIEELRRQK</sequence>
<feature type="chain" id="PRO_0000279586" description="RNA-directed RNA polymerase catalytic subunit">
    <location>
        <begin position="1"/>
        <end position="757"/>
    </location>
</feature>
<feature type="domain" description="RdRp catalytic" evidence="1">
    <location>
        <begin position="286"/>
        <end position="483"/>
    </location>
</feature>
<feature type="region of interest" description="Disordered" evidence="2">
    <location>
        <begin position="50"/>
        <end position="82"/>
    </location>
</feature>
<feature type="region of interest" description="Promoter-binding site" evidence="1">
    <location>
        <begin position="249"/>
        <end position="256"/>
    </location>
</feature>
<feature type="short sequence motif" description="Nuclear localization signal" evidence="1">
    <location>
        <begin position="187"/>
        <end position="195"/>
    </location>
</feature>
<feature type="short sequence motif" description="Nuclear localization signal" evidence="1">
    <location>
        <begin position="203"/>
        <end position="216"/>
    </location>
</feature>
<feature type="compositionally biased region" description="Polar residues" evidence="2">
    <location>
        <begin position="55"/>
        <end position="64"/>
    </location>
</feature>
<protein>
    <recommendedName>
        <fullName evidence="1">RNA-directed RNA polymerase catalytic subunit</fullName>
        <ecNumber evidence="1">2.7.7.48</ecNumber>
    </recommendedName>
    <alternativeName>
        <fullName evidence="1">Polymerase basic protein 1</fullName>
        <shortName evidence="1">PB1</shortName>
    </alternativeName>
    <alternativeName>
        <fullName evidence="1">RNA-directed RNA polymerase subunit P1</fullName>
    </alternativeName>
</protein>
<gene>
    <name evidence="1" type="primary">PB1</name>
</gene>
<keyword id="KW-1262">Eukaryotic host gene expression shutoff by virus</keyword>
<keyword id="KW-1191">Eukaryotic host transcription shutoff by virus</keyword>
<keyword id="KW-1035">Host cytoplasm</keyword>
<keyword id="KW-1190">Host gene expression shutoff by virus</keyword>
<keyword id="KW-1048">Host nucleus</keyword>
<keyword id="KW-0945">Host-virus interaction</keyword>
<keyword id="KW-1104">Inhibition of host RNA polymerase II by virus</keyword>
<keyword id="KW-0547">Nucleotide-binding</keyword>
<keyword id="KW-0548">Nucleotidyltransferase</keyword>
<keyword id="KW-0597">Phosphoprotein</keyword>
<keyword id="KW-0696">RNA-directed RNA polymerase</keyword>
<keyword id="KW-0808">Transferase</keyword>
<keyword id="KW-0693">Viral RNA replication</keyword>
<keyword id="KW-1195">Viral transcription</keyword>
<reference key="1">
    <citation type="submission" date="2005-11" db="EMBL/GenBank/DDBJ databases">
        <title>The NIAID influenza genome sequencing project.</title>
        <authorList>
            <person name="Ghedin E."/>
            <person name="Spiro D."/>
            <person name="Miller N."/>
            <person name="Zaborsky J."/>
            <person name="Feldblyum T."/>
            <person name="Subbu V."/>
            <person name="Shumway M."/>
            <person name="Sparenborg J."/>
            <person name="Groveman L."/>
            <person name="Halpin R."/>
            <person name="Sitz J."/>
            <person name="Koo H."/>
            <person name="Salzberg S.L."/>
            <person name="Webster R.G."/>
            <person name="Hoffmann E."/>
            <person name="Krauss S."/>
            <person name="Naeve C."/>
            <person name="Bao Y."/>
            <person name="Bolotov P."/>
            <person name="Dernovoy D."/>
            <person name="Kiryutin B."/>
            <person name="Lipman D.J."/>
            <person name="Tatusova T."/>
        </authorList>
    </citation>
    <scope>NUCLEOTIDE SEQUENCE [GENOMIC RNA]</scope>
</reference>
<evidence type="ECO:0000255" key="1">
    <source>
        <dbReference type="HAMAP-Rule" id="MF_04065"/>
    </source>
</evidence>
<evidence type="ECO:0000256" key="2">
    <source>
        <dbReference type="SAM" id="MobiDB-lite"/>
    </source>
</evidence>
<organism>
    <name type="scientific">Influenza A virus (strain A/Beijing/39/1975 H3N2)</name>
    <dbReference type="NCBI Taxonomy" id="383596"/>
    <lineage>
        <taxon>Viruses</taxon>
        <taxon>Riboviria</taxon>
        <taxon>Orthornavirae</taxon>
        <taxon>Negarnaviricota</taxon>
        <taxon>Polyploviricotina</taxon>
        <taxon>Insthoviricetes</taxon>
        <taxon>Articulavirales</taxon>
        <taxon>Orthomyxoviridae</taxon>
        <taxon>Alphainfluenzavirus</taxon>
        <taxon>Alphainfluenzavirus influenzae</taxon>
        <taxon>Influenza A virus</taxon>
    </lineage>
</organism>
<comment type="function">
    <text evidence="1">RNA-dependent RNA polymerase which is responsible for replication and transcription of virus RNA segments. The transcription of viral mRNAs occurs by a unique mechanism called cap-snatching. 5' methylated caps of cellular mRNAs are cleaved after 10-13 nucleotides by PA. In turn, these short capped RNAs are used as primers by PB1 for transcription of viral mRNAs. During virus replication, PB1 initiates RNA synthesis and copy vRNA into complementary RNA (cRNA) which in turn serves as a template for the production of more vRNAs.</text>
</comment>
<comment type="catalytic activity">
    <reaction evidence="1">
        <text>RNA(n) + a ribonucleoside 5'-triphosphate = RNA(n+1) + diphosphate</text>
        <dbReference type="Rhea" id="RHEA:21248"/>
        <dbReference type="Rhea" id="RHEA-COMP:14527"/>
        <dbReference type="Rhea" id="RHEA-COMP:17342"/>
        <dbReference type="ChEBI" id="CHEBI:33019"/>
        <dbReference type="ChEBI" id="CHEBI:61557"/>
        <dbReference type="ChEBI" id="CHEBI:140395"/>
        <dbReference type="EC" id="2.7.7.48"/>
    </reaction>
</comment>
<comment type="subunit">
    <text evidence="1">Influenza RNA polymerase is composed of three subunits: PB1, PB2 and PA. Interacts (via N-terminus) with PA (via C-terminus). Interacts (via C-terminus) with PB2 (via N-terminus); this interaction is essential for transcription initiation.</text>
</comment>
<comment type="subcellular location">
    <subcellularLocation>
        <location evidence="1">Host nucleus</location>
    </subcellularLocation>
    <subcellularLocation>
        <location evidence="1">Host cytoplasm</location>
    </subcellularLocation>
</comment>
<comment type="PTM">
    <text evidence="1">Phosphorylated by host PRKCA.</text>
</comment>
<comment type="similarity">
    <text evidence="1">Belongs to the influenza viruses polymerase PB1 family.</text>
</comment>